<comment type="subcellular location">
    <subcellularLocation>
        <location>Plastid</location>
        <location>Chloroplast</location>
    </subcellularLocation>
</comment>
<comment type="similarity">
    <text evidence="1">Belongs to the bacterial ribosomal protein bS16 family.</text>
</comment>
<reference key="1">
    <citation type="journal article" date="2006" name="Theor. Appl. Genet.">
        <title>Complete chloroplast genome sequences of Solanum bulbocastanum, Solanum lycopersicum and comparative analyses with other Solanaceae genomes.</title>
        <authorList>
            <person name="Daniell H."/>
            <person name="Lee S.-B."/>
            <person name="Grevich J."/>
            <person name="Saski C."/>
            <person name="Quesada-Vargas T."/>
            <person name="Guda C."/>
            <person name="Tomkins J."/>
            <person name="Jansen R.K."/>
        </authorList>
    </citation>
    <scope>NUCLEOTIDE SEQUENCE [LARGE SCALE GENOMIC DNA]</scope>
    <source>
        <strain>cv. PT29</strain>
    </source>
</reference>
<gene>
    <name evidence="1" type="primary">rps16</name>
</gene>
<dbReference type="EMBL" id="DQ347958">
    <property type="protein sequence ID" value="ABC56195.1"/>
    <property type="molecule type" value="Genomic_DNA"/>
</dbReference>
<dbReference type="RefSeq" id="YP_538830.1">
    <property type="nucleotide sequence ID" value="NC_007943.1"/>
</dbReference>
<dbReference type="SMR" id="Q2MIK5"/>
<dbReference type="GeneID" id="3989453"/>
<dbReference type="GO" id="GO:0009507">
    <property type="term" value="C:chloroplast"/>
    <property type="evidence" value="ECO:0007669"/>
    <property type="project" value="UniProtKB-SubCell"/>
</dbReference>
<dbReference type="GO" id="GO:0005739">
    <property type="term" value="C:mitochondrion"/>
    <property type="evidence" value="ECO:0007669"/>
    <property type="project" value="GOC"/>
</dbReference>
<dbReference type="GO" id="GO:0015935">
    <property type="term" value="C:small ribosomal subunit"/>
    <property type="evidence" value="ECO:0007669"/>
    <property type="project" value="TreeGrafter"/>
</dbReference>
<dbReference type="GO" id="GO:0003735">
    <property type="term" value="F:structural constituent of ribosome"/>
    <property type="evidence" value="ECO:0007669"/>
    <property type="project" value="InterPro"/>
</dbReference>
<dbReference type="GO" id="GO:0032543">
    <property type="term" value="P:mitochondrial translation"/>
    <property type="evidence" value="ECO:0007669"/>
    <property type="project" value="TreeGrafter"/>
</dbReference>
<dbReference type="FunFam" id="3.30.1320.10:FF:000003">
    <property type="entry name" value="30S ribosomal protein S16, chloroplastic"/>
    <property type="match status" value="1"/>
</dbReference>
<dbReference type="Gene3D" id="3.30.1320.10">
    <property type="match status" value="1"/>
</dbReference>
<dbReference type="HAMAP" id="MF_00385">
    <property type="entry name" value="Ribosomal_bS16"/>
    <property type="match status" value="1"/>
</dbReference>
<dbReference type="InterPro" id="IPR000307">
    <property type="entry name" value="Ribosomal_bS16"/>
</dbReference>
<dbReference type="InterPro" id="IPR020592">
    <property type="entry name" value="Ribosomal_bS16_CS"/>
</dbReference>
<dbReference type="InterPro" id="IPR023803">
    <property type="entry name" value="Ribosomal_bS16_dom_sf"/>
</dbReference>
<dbReference type="NCBIfam" id="TIGR00002">
    <property type="entry name" value="S16"/>
    <property type="match status" value="1"/>
</dbReference>
<dbReference type="PANTHER" id="PTHR12919">
    <property type="entry name" value="30S RIBOSOMAL PROTEIN S16"/>
    <property type="match status" value="1"/>
</dbReference>
<dbReference type="PANTHER" id="PTHR12919:SF20">
    <property type="entry name" value="SMALL RIBOSOMAL SUBUNIT PROTEIN BS16M"/>
    <property type="match status" value="1"/>
</dbReference>
<dbReference type="Pfam" id="PF00886">
    <property type="entry name" value="Ribosomal_S16"/>
    <property type="match status" value="1"/>
</dbReference>
<dbReference type="SUPFAM" id="SSF54565">
    <property type="entry name" value="Ribosomal protein S16"/>
    <property type="match status" value="1"/>
</dbReference>
<dbReference type="PROSITE" id="PS00732">
    <property type="entry name" value="RIBOSOMAL_S16"/>
    <property type="match status" value="1"/>
</dbReference>
<accession>Q2MIK5</accession>
<sequence>MVKLRLKRCGRKQRAVYRIVAIDVRSRREGKDLQKVGFYDPIKNQTYLNVPAILYFLEKGAQPTETVQDILKKAEVFKELRLNQPKFN</sequence>
<evidence type="ECO:0000255" key="1">
    <source>
        <dbReference type="HAMAP-Rule" id="MF_00385"/>
    </source>
</evidence>
<evidence type="ECO:0000305" key="2"/>
<name>RR16_SOLBU</name>
<organism>
    <name type="scientific">Solanum bulbocastanum</name>
    <name type="common">Wild potato</name>
    <dbReference type="NCBI Taxonomy" id="147425"/>
    <lineage>
        <taxon>Eukaryota</taxon>
        <taxon>Viridiplantae</taxon>
        <taxon>Streptophyta</taxon>
        <taxon>Embryophyta</taxon>
        <taxon>Tracheophyta</taxon>
        <taxon>Spermatophyta</taxon>
        <taxon>Magnoliopsida</taxon>
        <taxon>eudicotyledons</taxon>
        <taxon>Gunneridae</taxon>
        <taxon>Pentapetalae</taxon>
        <taxon>asterids</taxon>
        <taxon>lamiids</taxon>
        <taxon>Solanales</taxon>
        <taxon>Solanaceae</taxon>
        <taxon>Solanoideae</taxon>
        <taxon>Solaneae</taxon>
        <taxon>Solanum</taxon>
    </lineage>
</organism>
<proteinExistence type="inferred from homology"/>
<geneLocation type="chloroplast"/>
<keyword id="KW-0150">Chloroplast</keyword>
<keyword id="KW-0934">Plastid</keyword>
<keyword id="KW-0687">Ribonucleoprotein</keyword>
<keyword id="KW-0689">Ribosomal protein</keyword>
<protein>
    <recommendedName>
        <fullName evidence="1">Small ribosomal subunit protein bS16c</fullName>
    </recommendedName>
    <alternativeName>
        <fullName evidence="2">30S ribosomal protein S16, chloroplastic</fullName>
    </alternativeName>
</protein>
<feature type="chain" id="PRO_0000276959" description="Small ribosomal subunit protein bS16c">
    <location>
        <begin position="1"/>
        <end position="88"/>
    </location>
</feature>